<dbReference type="EC" id="2.7.7.80" evidence="2"/>
<dbReference type="EC" id="2.8.1.11" evidence="2"/>
<dbReference type="EMBL" id="AAFC03112005">
    <property type="status" value="NOT_ANNOTATED_CDS"/>
    <property type="molecule type" value="Genomic_DNA"/>
</dbReference>
<dbReference type="EMBL" id="BC126709">
    <property type="protein sequence ID" value="AAI26710.1"/>
    <property type="molecule type" value="mRNA"/>
</dbReference>
<dbReference type="RefSeq" id="NP_001075203.1">
    <molecule id="A1A4L8-2"/>
    <property type="nucleotide sequence ID" value="NM_001081734.2"/>
</dbReference>
<dbReference type="SMR" id="A1A4L8"/>
<dbReference type="FunCoup" id="A1A4L8">
    <property type="interactions" value="2795"/>
</dbReference>
<dbReference type="STRING" id="9913.ENSBTAP00000066193"/>
<dbReference type="GeneID" id="539728"/>
<dbReference type="KEGG" id="bta:539728"/>
<dbReference type="CTD" id="27304"/>
<dbReference type="VEuPathDB" id="HostDB:ENSBTAG00000049509"/>
<dbReference type="eggNOG" id="KOG2017">
    <property type="taxonomic scope" value="Eukaryota"/>
</dbReference>
<dbReference type="HOGENOM" id="CLU_013325_1_2_1"/>
<dbReference type="InParanoid" id="A1A4L8"/>
<dbReference type="OMA" id="IPDVGMD"/>
<dbReference type="OrthoDB" id="10261062at2759"/>
<dbReference type="TreeFam" id="TF106103"/>
<dbReference type="Reactome" id="R-BTA-947581">
    <property type="pathway name" value="Molybdenum cofactor biosynthesis"/>
</dbReference>
<dbReference type="UniPathway" id="UPA00344"/>
<dbReference type="UniPathway" id="UPA00988"/>
<dbReference type="Proteomes" id="UP000009136">
    <property type="component" value="Chromosome 13"/>
</dbReference>
<dbReference type="Bgee" id="ENSBTAG00000049509">
    <property type="expression patterns" value="Expressed in retina and 109 other cell types or tissues"/>
</dbReference>
<dbReference type="GO" id="GO:0005737">
    <property type="term" value="C:cytoplasm"/>
    <property type="evidence" value="ECO:0000318"/>
    <property type="project" value="GO_Central"/>
</dbReference>
<dbReference type="GO" id="GO:0005829">
    <property type="term" value="C:cytosol"/>
    <property type="evidence" value="ECO:0000250"/>
    <property type="project" value="UniProtKB"/>
</dbReference>
<dbReference type="GO" id="GO:0005524">
    <property type="term" value="F:ATP binding"/>
    <property type="evidence" value="ECO:0007669"/>
    <property type="project" value="UniProtKB-KW"/>
</dbReference>
<dbReference type="GO" id="GO:0046872">
    <property type="term" value="F:metal ion binding"/>
    <property type="evidence" value="ECO:0007669"/>
    <property type="project" value="UniProtKB-KW"/>
</dbReference>
<dbReference type="GO" id="GO:0061605">
    <property type="term" value="F:molybdopterin-synthase adenylyltransferase activity"/>
    <property type="evidence" value="ECO:0007669"/>
    <property type="project" value="UniProtKB-EC"/>
</dbReference>
<dbReference type="GO" id="GO:0061604">
    <property type="term" value="F:molybdopterin-synthase sulfurtransferase activity"/>
    <property type="evidence" value="ECO:0000250"/>
    <property type="project" value="UniProtKB"/>
</dbReference>
<dbReference type="GO" id="GO:0016779">
    <property type="term" value="F:nucleotidyltransferase activity"/>
    <property type="evidence" value="ECO:0000250"/>
    <property type="project" value="UniProtKB"/>
</dbReference>
<dbReference type="GO" id="GO:0016783">
    <property type="term" value="F:sulfurtransferase activity"/>
    <property type="evidence" value="ECO:0000250"/>
    <property type="project" value="UniProtKB"/>
</dbReference>
<dbReference type="GO" id="GO:0004792">
    <property type="term" value="F:thiosulfate-cyanide sulfurtransferase activity"/>
    <property type="evidence" value="ECO:0000318"/>
    <property type="project" value="GO_Central"/>
</dbReference>
<dbReference type="GO" id="GO:0042292">
    <property type="term" value="F:URM1 activating enzyme activity"/>
    <property type="evidence" value="ECO:0000250"/>
    <property type="project" value="UniProtKB"/>
</dbReference>
<dbReference type="GO" id="GO:0006777">
    <property type="term" value="P:Mo-molybdopterin cofactor biosynthetic process"/>
    <property type="evidence" value="ECO:0000250"/>
    <property type="project" value="UniProtKB"/>
</dbReference>
<dbReference type="GO" id="GO:0032447">
    <property type="term" value="P:protein urmylation"/>
    <property type="evidence" value="ECO:0000318"/>
    <property type="project" value="GO_Central"/>
</dbReference>
<dbReference type="GO" id="GO:0034227">
    <property type="term" value="P:tRNA thio-modification"/>
    <property type="evidence" value="ECO:0000250"/>
    <property type="project" value="UniProtKB"/>
</dbReference>
<dbReference type="GO" id="GO:0002143">
    <property type="term" value="P:tRNA wobble position uridine thiolation"/>
    <property type="evidence" value="ECO:0000318"/>
    <property type="project" value="GO_Central"/>
</dbReference>
<dbReference type="GO" id="GO:0002098">
    <property type="term" value="P:tRNA wobble uridine modification"/>
    <property type="evidence" value="ECO:0000250"/>
    <property type="project" value="UniProtKB"/>
</dbReference>
<dbReference type="CDD" id="cd01526">
    <property type="entry name" value="RHOD_ThiF"/>
    <property type="match status" value="1"/>
</dbReference>
<dbReference type="CDD" id="cd00757">
    <property type="entry name" value="ThiF_MoeB_HesA_family"/>
    <property type="match status" value="1"/>
</dbReference>
<dbReference type="FunFam" id="3.40.250.10:FF:000014">
    <property type="entry name" value="Adenylyltransferase and sulfurtransferase MOCS3"/>
    <property type="match status" value="1"/>
</dbReference>
<dbReference type="FunFam" id="3.40.50.720:FF:000206">
    <property type="entry name" value="Adenylyltransferase and sulfurtransferase MOCS3"/>
    <property type="match status" value="1"/>
</dbReference>
<dbReference type="Gene3D" id="3.40.50.720">
    <property type="entry name" value="NAD(P)-binding Rossmann-like Domain"/>
    <property type="match status" value="1"/>
</dbReference>
<dbReference type="Gene3D" id="3.40.250.10">
    <property type="entry name" value="Rhodanese-like domain"/>
    <property type="match status" value="1"/>
</dbReference>
<dbReference type="HAMAP" id="MF_03049">
    <property type="entry name" value="MOCS3_Uba4"/>
    <property type="match status" value="1"/>
</dbReference>
<dbReference type="InterPro" id="IPR028885">
    <property type="entry name" value="MOCS3/Uba4"/>
</dbReference>
<dbReference type="InterPro" id="IPR001763">
    <property type="entry name" value="Rhodanese-like_dom"/>
</dbReference>
<dbReference type="InterPro" id="IPR036873">
    <property type="entry name" value="Rhodanese-like_dom_sf"/>
</dbReference>
<dbReference type="InterPro" id="IPR045886">
    <property type="entry name" value="ThiF/MoeB/HesA"/>
</dbReference>
<dbReference type="InterPro" id="IPR000594">
    <property type="entry name" value="ThiF_NAD_FAD-bd"/>
</dbReference>
<dbReference type="InterPro" id="IPR035985">
    <property type="entry name" value="Ubiquitin-activating_enz"/>
</dbReference>
<dbReference type="NCBIfam" id="NF004281">
    <property type="entry name" value="PRK05690.1"/>
    <property type="match status" value="1"/>
</dbReference>
<dbReference type="PANTHER" id="PTHR10953:SF102">
    <property type="entry name" value="ADENYLYLTRANSFERASE AND SULFURTRANSFERASE MOCS3"/>
    <property type="match status" value="1"/>
</dbReference>
<dbReference type="PANTHER" id="PTHR10953">
    <property type="entry name" value="UBIQUITIN-ACTIVATING ENZYME E1"/>
    <property type="match status" value="1"/>
</dbReference>
<dbReference type="Pfam" id="PF00581">
    <property type="entry name" value="Rhodanese"/>
    <property type="match status" value="1"/>
</dbReference>
<dbReference type="Pfam" id="PF00899">
    <property type="entry name" value="ThiF"/>
    <property type="match status" value="1"/>
</dbReference>
<dbReference type="SMART" id="SM00450">
    <property type="entry name" value="RHOD"/>
    <property type="match status" value="1"/>
</dbReference>
<dbReference type="SUPFAM" id="SSF69572">
    <property type="entry name" value="Activating enzymes of the ubiquitin-like proteins"/>
    <property type="match status" value="1"/>
</dbReference>
<dbReference type="PROSITE" id="PS50206">
    <property type="entry name" value="RHODANESE_3"/>
    <property type="match status" value="1"/>
</dbReference>
<protein>
    <recommendedName>
        <fullName evidence="2">Adenylyltransferase and sulfurtransferase MOCS3</fullName>
    </recommendedName>
    <alternativeName>
        <fullName evidence="2">Molybdenum cofactor synthesis protein 3</fullName>
    </alternativeName>
    <domain>
        <recommendedName>
            <fullName evidence="2">Molybdopterin-synthase adenylyltransferase</fullName>
            <ecNumber evidence="2">2.7.7.80</ecNumber>
        </recommendedName>
        <alternativeName>
            <fullName evidence="2">Adenylyltransferase MOCS3</fullName>
        </alternativeName>
        <alternativeName>
            <fullName evidence="2">Sulfur carrier protein MOCS2A adenylyltransferase</fullName>
        </alternativeName>
    </domain>
    <domain>
        <recommendedName>
            <fullName evidence="2">Molybdopterin-synthase sulfurtransferase</fullName>
            <ecNumber evidence="2">2.8.1.11</ecNumber>
        </recommendedName>
        <alternativeName>
            <fullName evidence="2">Sulfur carrier protein MOCS2A sulfurtransferase</fullName>
        </alternativeName>
        <alternativeName>
            <fullName evidence="2">Sulfurtransferase MOCS3</fullName>
        </alternativeName>
    </domain>
</protein>
<comment type="function">
    <text evidence="2">Plays a central role in 2-thiolation of mcm(5)S(2)U at tRNA wobble positions of cytosolic tRNA(Lys), tRNA(Glu) and tRNA(Gln). Also essential during biosynthesis of the molybdenum cofactor. Acts by mediating the C-terminal thiocarboxylation of sulfur carriers URM1 and MOCS2A. Its N-terminus first activates URM1 and MOCS2A as acyl-adenylates (-COAMP), then the persulfide sulfur on the catalytic cysteine is transferred to URM1 and MOCS2A to form thiocarboxylation (-COSH) of their C-terminus. The reaction probably involves hydrogen sulfide that is generated from the persulfide intermediate and that acts as a nucleophile towards URM1 and MOCS2A. Subsequently, a transient disulfide bond is formed. Does not use thiosulfate as sulfur donor; NFS1 acting as a sulfur donor for thiocarboxylation reactions.</text>
</comment>
<comment type="catalytic activity">
    <reaction evidence="2">
        <text>[molybdopterin-synthase sulfur-carrier protein]-C-terminal Gly-Gly + ATP + H(+) = [molybdopterin-synthase sulfur-carrier protein]-C-terminal Gly-Gly-AMP + diphosphate</text>
        <dbReference type="Rhea" id="RHEA:43616"/>
        <dbReference type="Rhea" id="RHEA-COMP:12159"/>
        <dbReference type="Rhea" id="RHEA-COMP:12202"/>
        <dbReference type="ChEBI" id="CHEBI:15378"/>
        <dbReference type="ChEBI" id="CHEBI:30616"/>
        <dbReference type="ChEBI" id="CHEBI:33019"/>
        <dbReference type="ChEBI" id="CHEBI:90618"/>
        <dbReference type="ChEBI" id="CHEBI:90778"/>
        <dbReference type="EC" id="2.7.7.80"/>
    </reaction>
</comment>
<comment type="catalytic activity">
    <reaction evidence="2">
        <text>[molybdopterin-synthase sulfur-carrier protein]-C-terminal Gly-Gly-AMP + S-sulfanyl-L-cysteinyl-[cysteine desulfurase] + AH2 = [molybdopterin-synthase sulfur-carrier protein]-C-terminal-Gly-aminoethanethioate + L-cysteinyl-[cysteine desulfurase] + A + AMP + 2 H(+)</text>
        <dbReference type="Rhea" id="RHEA:48612"/>
        <dbReference type="Rhea" id="RHEA-COMP:12157"/>
        <dbReference type="Rhea" id="RHEA-COMP:12158"/>
        <dbReference type="Rhea" id="RHEA-COMP:12159"/>
        <dbReference type="Rhea" id="RHEA-COMP:19907"/>
        <dbReference type="ChEBI" id="CHEBI:13193"/>
        <dbReference type="ChEBI" id="CHEBI:15378"/>
        <dbReference type="ChEBI" id="CHEBI:17499"/>
        <dbReference type="ChEBI" id="CHEBI:29950"/>
        <dbReference type="ChEBI" id="CHEBI:61963"/>
        <dbReference type="ChEBI" id="CHEBI:90618"/>
        <dbReference type="ChEBI" id="CHEBI:232372"/>
        <dbReference type="ChEBI" id="CHEBI:456215"/>
        <dbReference type="EC" id="2.8.1.11"/>
    </reaction>
</comment>
<comment type="cofactor">
    <cofactor evidence="2">
        <name>Zn(2+)</name>
        <dbReference type="ChEBI" id="CHEBI:29105"/>
    </cofactor>
    <text evidence="2">Binds 1 zinc ion per subunit.</text>
</comment>
<comment type="pathway">
    <text evidence="2">tRNA modification; 5-methoxycarbonylmethyl-2-thiouridine-tRNA biosynthesis.</text>
</comment>
<comment type="pathway">
    <text evidence="2">Cofactor biosynthesis; molybdopterin biosynthesis.</text>
</comment>
<comment type="subunit">
    <text evidence="2">Interacts with NFS1.</text>
</comment>
<comment type="subcellular location">
    <subcellularLocation>
        <location evidence="1">Cytoplasm</location>
        <location evidence="1">Cytosol</location>
    </subcellularLocation>
</comment>
<comment type="alternative products">
    <event type="alternative splicing"/>
    <isoform>
        <id>A1A4L8-1</id>
        <name>1</name>
        <sequence type="displayed"/>
    </isoform>
    <isoform>
        <id>A1A4L8-2</id>
        <name>2</name>
        <sequence type="described" ref="VSP_036806"/>
    </isoform>
</comment>
<comment type="similarity">
    <text evidence="2">In the N-terminal section; belongs to the HesA/MoeB/ThiF family. UBA4 subfamily.</text>
</comment>
<proteinExistence type="evidence at transcript level"/>
<accession>A1A4L8</accession>
<reference key="1">
    <citation type="journal article" date="2009" name="Science">
        <title>The genome sequence of taurine cattle: a window to ruminant biology and evolution.</title>
        <authorList>
            <consortium name="The bovine genome sequencing and analysis consortium"/>
        </authorList>
    </citation>
    <scope>NUCLEOTIDE SEQUENCE [LARGE SCALE GENOMIC DNA]</scope>
    <source>
        <strain>Hereford</strain>
    </source>
</reference>
<reference key="2">
    <citation type="submission" date="2006-10" db="EMBL/GenBank/DDBJ databases">
        <authorList>
            <consortium name="NIH - Mammalian Gene Collection (MGC) project"/>
        </authorList>
    </citation>
    <scope>NUCLEOTIDE SEQUENCE [LARGE SCALE MRNA] (ISOFORM 2)</scope>
    <source>
        <strain>Hereford</strain>
        <tissue>Hypothalamus</tissue>
    </source>
</reference>
<evidence type="ECO:0000250" key="1">
    <source>
        <dbReference type="UniProtKB" id="O95396"/>
    </source>
</evidence>
<evidence type="ECO:0000255" key="2">
    <source>
        <dbReference type="HAMAP-Rule" id="MF_03049"/>
    </source>
</evidence>
<evidence type="ECO:0000303" key="3">
    <source ref="2"/>
</evidence>
<organism>
    <name type="scientific">Bos taurus</name>
    <name type="common">Bovine</name>
    <dbReference type="NCBI Taxonomy" id="9913"/>
    <lineage>
        <taxon>Eukaryota</taxon>
        <taxon>Metazoa</taxon>
        <taxon>Chordata</taxon>
        <taxon>Craniata</taxon>
        <taxon>Vertebrata</taxon>
        <taxon>Euteleostomi</taxon>
        <taxon>Mammalia</taxon>
        <taxon>Eutheria</taxon>
        <taxon>Laurasiatheria</taxon>
        <taxon>Artiodactyla</taxon>
        <taxon>Ruminantia</taxon>
        <taxon>Pecora</taxon>
        <taxon>Bovidae</taxon>
        <taxon>Bovinae</taxon>
        <taxon>Bos</taxon>
    </lineage>
</organism>
<sequence length="455" mass="48834">MAAREEVLALQAEVAQREEELSSLKQRLAAALSTGQESARSVPVSPLPPRAALSREEIRRYSRQLVLPELGMQGQLRLAAAAVLVVGCGGLGCPLAQYLAAAGVGRLGLVDYDVVEASNLARQVLHGEALAGQAKVFSAAAALRRLNSAVECVPYAQALTPATALDLVRRYDVVADCSDNAPTRYLVSDACVLAGRPLVSASALRFEGQLTVYHYGGGPCYRCVFPRPPPAETVTSCADGGVLGAVTGVLGCLQALEVLKTAAGLGPSYSGRLLLFDALRGDFRCIRLRRRRPDCAACGERPTVTDLQDYESFCGSSATDKCRSLRLLSPEERISIMDYKRLLDSRSPHLLLDVRPQVEVDICRLPHALHIPLKSLERRDAESLKVLGEAIREGKQGAQEGASVPIYVICKLGNDSQKAVKILQSWADLDSLTVKDVVGGLMAWAAKIDGTFPQY</sequence>
<name>MOCS3_BOVIN</name>
<feature type="chain" id="PRO_0000369193" description="Adenylyltransferase and sulfurtransferase MOCS3">
    <location>
        <begin position="1"/>
        <end position="455"/>
    </location>
</feature>
<feature type="domain" description="Rhodanese" evidence="2">
    <location>
        <begin position="345"/>
        <end position="453"/>
    </location>
</feature>
<feature type="region of interest" description="Interaction with NFS1" evidence="1">
    <location>
        <begin position="156"/>
        <end position="236"/>
    </location>
</feature>
<feature type="active site" description="Glycyl thioester intermediate; for adenylyltransferase activity" evidence="2">
    <location>
        <position position="237"/>
    </location>
</feature>
<feature type="active site" description="Cysteine persulfide intermediate; for sulfurtransferase activity" evidence="2">
    <location>
        <position position="410"/>
    </location>
</feature>
<feature type="binding site" evidence="2">
    <location>
        <position position="90"/>
    </location>
    <ligand>
        <name>ATP</name>
        <dbReference type="ChEBI" id="CHEBI:30616"/>
    </ligand>
</feature>
<feature type="binding site" evidence="2">
    <location>
        <position position="111"/>
    </location>
    <ligand>
        <name>ATP</name>
        <dbReference type="ChEBI" id="CHEBI:30616"/>
    </ligand>
</feature>
<feature type="binding site" evidence="2">
    <location>
        <begin position="118"/>
        <end position="122"/>
    </location>
    <ligand>
        <name>ATP</name>
        <dbReference type="ChEBI" id="CHEBI:30616"/>
    </ligand>
</feature>
<feature type="binding site" evidence="2">
    <location>
        <position position="135"/>
    </location>
    <ligand>
        <name>ATP</name>
        <dbReference type="ChEBI" id="CHEBI:30616"/>
    </ligand>
</feature>
<feature type="binding site" evidence="2">
    <location>
        <begin position="179"/>
        <end position="180"/>
    </location>
    <ligand>
        <name>ATP</name>
        <dbReference type="ChEBI" id="CHEBI:30616"/>
    </ligand>
</feature>
<feature type="binding site" evidence="2">
    <location>
        <position position="220"/>
    </location>
    <ligand>
        <name>Zn(2+)</name>
        <dbReference type="ChEBI" id="CHEBI:29105"/>
    </ligand>
</feature>
<feature type="binding site" evidence="2">
    <location>
        <position position="223"/>
    </location>
    <ligand>
        <name>Zn(2+)</name>
        <dbReference type="ChEBI" id="CHEBI:29105"/>
    </ligand>
</feature>
<feature type="binding site" evidence="2">
    <location>
        <position position="295"/>
    </location>
    <ligand>
        <name>Zn(2+)</name>
        <dbReference type="ChEBI" id="CHEBI:29105"/>
    </ligand>
</feature>
<feature type="binding site" evidence="2">
    <location>
        <position position="298"/>
    </location>
    <ligand>
        <name>Zn(2+)</name>
        <dbReference type="ChEBI" id="CHEBI:29105"/>
    </ligand>
</feature>
<feature type="modified residue" description="Cysteine persulfide" evidence="1">
    <location>
        <position position="410"/>
    </location>
</feature>
<feature type="disulfide bond" description="Alternate" evidence="2">
    <location>
        <begin position="314"/>
        <end position="322"/>
    </location>
</feature>
<feature type="splice variant" id="VSP_036806" description="In isoform 2." evidence="3">
    <location>
        <begin position="99"/>
        <end position="158"/>
    </location>
</feature>
<keyword id="KW-0025">Alternative splicing</keyword>
<keyword id="KW-0067">ATP-binding</keyword>
<keyword id="KW-0963">Cytoplasm</keyword>
<keyword id="KW-1015">Disulfide bond</keyword>
<keyword id="KW-0479">Metal-binding</keyword>
<keyword id="KW-0501">Molybdenum cofactor biosynthesis</keyword>
<keyword id="KW-0511">Multifunctional enzyme</keyword>
<keyword id="KW-0547">Nucleotide-binding</keyword>
<keyword id="KW-0548">Nucleotidyltransferase</keyword>
<keyword id="KW-1185">Reference proteome</keyword>
<keyword id="KW-0808">Transferase</keyword>
<keyword id="KW-0819">tRNA processing</keyword>
<keyword id="KW-0862">Zinc</keyword>
<gene>
    <name evidence="2" type="primary">MOCS3</name>
    <name evidence="2" type="synonym">UBA4</name>
</gene>